<name>MRAZ_MYCCT</name>
<accession>Q2SS96</accession>
<evidence type="ECO:0000255" key="1">
    <source>
        <dbReference type="HAMAP-Rule" id="MF_01008"/>
    </source>
</evidence>
<evidence type="ECO:0000255" key="2">
    <source>
        <dbReference type="PROSITE-ProRule" id="PRU01076"/>
    </source>
</evidence>
<sequence>MLFGTYEHCMDAKQRLTLPAKLRNKLSNPIYLTKGFEADLEIWSKDDFLLQIKEHLNKISDQKDIRDLERIIWSNTVEIGIDNLGRIKIPYNLIQSLNIEKDVFILGLGNRLEIWSKNKYNQHKKELLKENS</sequence>
<proteinExistence type="inferred from homology"/>
<feature type="chain" id="PRO_0000230090" description="Transcriptional regulator MraZ">
    <location>
        <begin position="1"/>
        <end position="132"/>
    </location>
</feature>
<feature type="domain" description="SpoVT-AbrB 1" evidence="2">
    <location>
        <begin position="5"/>
        <end position="47"/>
    </location>
</feature>
<feature type="domain" description="SpoVT-AbrB 2" evidence="2">
    <location>
        <begin position="76"/>
        <end position="119"/>
    </location>
</feature>
<reference key="1">
    <citation type="submission" date="2005-09" db="EMBL/GenBank/DDBJ databases">
        <authorList>
            <person name="Glass J.I."/>
            <person name="Lartigue C."/>
            <person name="Pfannkoch C."/>
            <person name="Baden-Tillson H."/>
            <person name="Smith H.O."/>
            <person name="Venter J.C."/>
            <person name="Roske K."/>
            <person name="Wise K.S."/>
            <person name="Calcutt M.J."/>
            <person name="Nelson W.C."/>
            <person name="Nierman W.C."/>
        </authorList>
    </citation>
    <scope>NUCLEOTIDE SEQUENCE [LARGE SCALE GENOMIC DNA]</scope>
    <source>
        <strain>California kid / ATCC 27343 / NCTC 10154</strain>
    </source>
</reference>
<protein>
    <recommendedName>
        <fullName>Transcriptional regulator MraZ</fullName>
    </recommendedName>
</protein>
<gene>
    <name evidence="1" type="primary">mraZ</name>
    <name type="ordered locus">MCAP_0387</name>
</gene>
<dbReference type="EMBL" id="CP000123">
    <property type="protein sequence ID" value="ABC01721.1"/>
    <property type="molecule type" value="Genomic_DNA"/>
</dbReference>
<dbReference type="RefSeq" id="WP_011387267.1">
    <property type="nucleotide sequence ID" value="NC_007633.1"/>
</dbReference>
<dbReference type="SMR" id="Q2SS96"/>
<dbReference type="GeneID" id="23778658"/>
<dbReference type="KEGG" id="mcp:MCAP_0387"/>
<dbReference type="HOGENOM" id="CLU_107907_0_5_14"/>
<dbReference type="PhylomeDB" id="Q2SS96"/>
<dbReference type="Proteomes" id="UP000001928">
    <property type="component" value="Chromosome"/>
</dbReference>
<dbReference type="GO" id="GO:0005737">
    <property type="term" value="C:cytoplasm"/>
    <property type="evidence" value="ECO:0007669"/>
    <property type="project" value="UniProtKB-UniRule"/>
</dbReference>
<dbReference type="GO" id="GO:0009295">
    <property type="term" value="C:nucleoid"/>
    <property type="evidence" value="ECO:0007669"/>
    <property type="project" value="UniProtKB-SubCell"/>
</dbReference>
<dbReference type="GO" id="GO:0003700">
    <property type="term" value="F:DNA-binding transcription factor activity"/>
    <property type="evidence" value="ECO:0007669"/>
    <property type="project" value="UniProtKB-UniRule"/>
</dbReference>
<dbReference type="GO" id="GO:0000976">
    <property type="term" value="F:transcription cis-regulatory region binding"/>
    <property type="evidence" value="ECO:0007669"/>
    <property type="project" value="TreeGrafter"/>
</dbReference>
<dbReference type="GO" id="GO:2000143">
    <property type="term" value="P:negative regulation of DNA-templated transcription initiation"/>
    <property type="evidence" value="ECO:0007669"/>
    <property type="project" value="TreeGrafter"/>
</dbReference>
<dbReference type="CDD" id="cd16321">
    <property type="entry name" value="MraZ_C"/>
    <property type="match status" value="1"/>
</dbReference>
<dbReference type="CDD" id="cd16320">
    <property type="entry name" value="MraZ_N"/>
    <property type="match status" value="1"/>
</dbReference>
<dbReference type="Gene3D" id="3.40.1550.20">
    <property type="entry name" value="Transcriptional regulator MraZ domain"/>
    <property type="match status" value="1"/>
</dbReference>
<dbReference type="HAMAP" id="MF_01008">
    <property type="entry name" value="MraZ"/>
    <property type="match status" value="1"/>
</dbReference>
<dbReference type="InterPro" id="IPR003444">
    <property type="entry name" value="MraZ"/>
</dbReference>
<dbReference type="InterPro" id="IPR035644">
    <property type="entry name" value="MraZ_C"/>
</dbReference>
<dbReference type="InterPro" id="IPR020603">
    <property type="entry name" value="MraZ_dom"/>
</dbReference>
<dbReference type="InterPro" id="IPR035642">
    <property type="entry name" value="MraZ_N"/>
</dbReference>
<dbReference type="InterPro" id="IPR038619">
    <property type="entry name" value="MraZ_sf"/>
</dbReference>
<dbReference type="InterPro" id="IPR007159">
    <property type="entry name" value="SpoVT-AbrB_dom"/>
</dbReference>
<dbReference type="InterPro" id="IPR037914">
    <property type="entry name" value="SpoVT-AbrB_sf"/>
</dbReference>
<dbReference type="NCBIfam" id="TIGR00242">
    <property type="entry name" value="division/cell wall cluster transcriptional repressor MraZ"/>
    <property type="match status" value="1"/>
</dbReference>
<dbReference type="PANTHER" id="PTHR34701">
    <property type="entry name" value="TRANSCRIPTIONAL REGULATOR MRAZ"/>
    <property type="match status" value="1"/>
</dbReference>
<dbReference type="PANTHER" id="PTHR34701:SF1">
    <property type="entry name" value="TRANSCRIPTIONAL REGULATOR MRAZ"/>
    <property type="match status" value="1"/>
</dbReference>
<dbReference type="Pfam" id="PF02381">
    <property type="entry name" value="MraZ"/>
    <property type="match status" value="2"/>
</dbReference>
<dbReference type="SUPFAM" id="SSF89447">
    <property type="entry name" value="AbrB/MazE/MraZ-like"/>
    <property type="match status" value="1"/>
</dbReference>
<dbReference type="PROSITE" id="PS51740">
    <property type="entry name" value="SPOVT_ABRB"/>
    <property type="match status" value="2"/>
</dbReference>
<organism>
    <name type="scientific">Mycoplasma capricolum subsp. capricolum (strain California kid / ATCC 27343 / NCTC 10154)</name>
    <dbReference type="NCBI Taxonomy" id="340047"/>
    <lineage>
        <taxon>Bacteria</taxon>
        <taxon>Bacillati</taxon>
        <taxon>Mycoplasmatota</taxon>
        <taxon>Mollicutes</taxon>
        <taxon>Mycoplasmataceae</taxon>
        <taxon>Mycoplasma</taxon>
    </lineage>
</organism>
<comment type="subunit">
    <text evidence="1">Forms oligomers.</text>
</comment>
<comment type="subcellular location">
    <subcellularLocation>
        <location evidence="1">Cytoplasm</location>
        <location evidence="1">Nucleoid</location>
    </subcellularLocation>
</comment>
<comment type="similarity">
    <text evidence="1">Belongs to the MraZ family.</text>
</comment>
<keyword id="KW-0963">Cytoplasm</keyword>
<keyword id="KW-0238">DNA-binding</keyword>
<keyword id="KW-0677">Repeat</keyword>
<keyword id="KW-0804">Transcription</keyword>
<keyword id="KW-0805">Transcription regulation</keyword>